<name>PETD_TOBAC</name>
<dbReference type="EMBL" id="Z00044">
    <property type="protein sequence ID" value="CAA77425.1"/>
    <property type="molecule type" value="Genomic_DNA"/>
</dbReference>
<dbReference type="PIR" id="A00165">
    <property type="entry name" value="WMNT17"/>
</dbReference>
<dbReference type="RefSeq" id="NP_054531.1">
    <property type="nucleotide sequence ID" value="NC_001879.2"/>
</dbReference>
<dbReference type="SMR" id="P06249"/>
<dbReference type="GeneID" id="800494"/>
<dbReference type="KEGG" id="nta:800494"/>
<dbReference type="OMA" id="KKGMGHN"/>
<dbReference type="OrthoDB" id="1246300at2759"/>
<dbReference type="Proteomes" id="UP000084051">
    <property type="component" value="Unplaced"/>
</dbReference>
<dbReference type="GO" id="GO:0009535">
    <property type="term" value="C:chloroplast thylakoid membrane"/>
    <property type="evidence" value="ECO:0007669"/>
    <property type="project" value="UniProtKB-SubCell"/>
</dbReference>
<dbReference type="GO" id="GO:0045158">
    <property type="term" value="F:electron transporter, transferring electrons within cytochrome b6/f complex of photosystem II activity"/>
    <property type="evidence" value="ECO:0007669"/>
    <property type="project" value="UniProtKB-UniRule"/>
</dbReference>
<dbReference type="GO" id="GO:0045156">
    <property type="term" value="F:electron transporter, transferring electrons within the cyclic electron transport pathway of photosynthesis activity"/>
    <property type="evidence" value="ECO:0007669"/>
    <property type="project" value="InterPro"/>
</dbReference>
<dbReference type="GO" id="GO:0016491">
    <property type="term" value="F:oxidoreductase activity"/>
    <property type="evidence" value="ECO:0007669"/>
    <property type="project" value="InterPro"/>
</dbReference>
<dbReference type="GO" id="GO:0009767">
    <property type="term" value="P:photosynthetic electron transport chain"/>
    <property type="evidence" value="ECO:0007669"/>
    <property type="project" value="InterPro"/>
</dbReference>
<dbReference type="CDD" id="cd00290">
    <property type="entry name" value="cytochrome_b_C"/>
    <property type="match status" value="1"/>
</dbReference>
<dbReference type="FunFam" id="1.10.287.980:FF:000001">
    <property type="entry name" value="Cytochrome b6-f complex subunit 4"/>
    <property type="match status" value="1"/>
</dbReference>
<dbReference type="FunFam" id="1.20.5.510:FF:000002">
    <property type="entry name" value="Cytochrome b6-f complex subunit 4"/>
    <property type="match status" value="1"/>
</dbReference>
<dbReference type="Gene3D" id="1.10.287.980">
    <property type="entry name" value="plastocyanin oxidoreductase"/>
    <property type="match status" value="1"/>
</dbReference>
<dbReference type="Gene3D" id="1.20.5.510">
    <property type="entry name" value="Single helix bin"/>
    <property type="match status" value="1"/>
</dbReference>
<dbReference type="HAMAP" id="MF_01344">
    <property type="entry name" value="Cytb6_f_subIV"/>
    <property type="match status" value="1"/>
</dbReference>
<dbReference type="InterPro" id="IPR005798">
    <property type="entry name" value="Cyt_b/b6_C"/>
</dbReference>
<dbReference type="InterPro" id="IPR036150">
    <property type="entry name" value="Cyt_b/b6_C_sf"/>
</dbReference>
<dbReference type="InterPro" id="IPR005870">
    <property type="entry name" value="Cyt_b6/f_cplx_suIV"/>
</dbReference>
<dbReference type="InterPro" id="IPR048260">
    <property type="entry name" value="Cytochrome_b_C_euk/bac"/>
</dbReference>
<dbReference type="NCBIfam" id="TIGR01156">
    <property type="entry name" value="cytb6_f_IV"/>
    <property type="match status" value="1"/>
</dbReference>
<dbReference type="PANTHER" id="PTHR19271">
    <property type="entry name" value="CYTOCHROME B"/>
    <property type="match status" value="1"/>
</dbReference>
<dbReference type="PANTHER" id="PTHR19271:SF16">
    <property type="entry name" value="CYTOCHROME B"/>
    <property type="match status" value="1"/>
</dbReference>
<dbReference type="Pfam" id="PF00032">
    <property type="entry name" value="Cytochrom_B_C"/>
    <property type="match status" value="1"/>
</dbReference>
<dbReference type="PIRSF" id="PIRSF000033">
    <property type="entry name" value="B6f_17K"/>
    <property type="match status" value="1"/>
</dbReference>
<dbReference type="SUPFAM" id="SSF81648">
    <property type="entry name" value="a domain/subunit of cytochrome bc1 complex (Ubiquinol-cytochrome c reductase)"/>
    <property type="match status" value="1"/>
</dbReference>
<dbReference type="PROSITE" id="PS51003">
    <property type="entry name" value="CYTB_CTER"/>
    <property type="match status" value="1"/>
</dbReference>
<sequence>MGVTKKPDLNDPVLRAKLAKGMGHNYYGEPAWPNDLLYIFPVVILGTIACNVGLAVLEPSMIGEPADPFATPLEILPEWYFFPVFQILRTVPNKLLGVLLMVSVPAGLLTVPFLENVNKFQNPFRRPVATTVFLIGTAVALWLGIGATLPIDKSLTLGLF</sequence>
<comment type="function">
    <text evidence="2">Component of the cytochrome b6-f complex, which mediates electron transfer between photosystem II (PSII) and photosystem I (PSI), cyclic electron flow around PSI, and state transitions.</text>
</comment>
<comment type="subunit">
    <text evidence="1">The 4 large subunits of the cytochrome b6-f complex are cytochrome b6, subunit IV (17 kDa polypeptide, petD), cytochrome f and the Rieske protein, while the 4 small subunits are petG, petL, petM and petN. The complex functions as a dimer (By similarity).</text>
</comment>
<comment type="subcellular location">
    <subcellularLocation>
        <location evidence="2">Plastid</location>
        <location evidence="2">Chloroplast thylakoid membrane</location>
        <topology evidence="2">Multi-pass membrane protein</topology>
    </subcellularLocation>
</comment>
<comment type="similarity">
    <text evidence="2">Belongs to the cytochrome b family. PetD subfamily.</text>
</comment>
<geneLocation type="chloroplast"/>
<organism>
    <name type="scientific">Nicotiana tabacum</name>
    <name type="common">Common tobacco</name>
    <dbReference type="NCBI Taxonomy" id="4097"/>
    <lineage>
        <taxon>Eukaryota</taxon>
        <taxon>Viridiplantae</taxon>
        <taxon>Streptophyta</taxon>
        <taxon>Embryophyta</taxon>
        <taxon>Tracheophyta</taxon>
        <taxon>Spermatophyta</taxon>
        <taxon>Magnoliopsida</taxon>
        <taxon>eudicotyledons</taxon>
        <taxon>Gunneridae</taxon>
        <taxon>Pentapetalae</taxon>
        <taxon>asterids</taxon>
        <taxon>lamiids</taxon>
        <taxon>Solanales</taxon>
        <taxon>Solanaceae</taxon>
        <taxon>Nicotianoideae</taxon>
        <taxon>Nicotianeae</taxon>
        <taxon>Nicotiana</taxon>
    </lineage>
</organism>
<keyword id="KW-0150">Chloroplast</keyword>
<keyword id="KW-0249">Electron transport</keyword>
<keyword id="KW-0472">Membrane</keyword>
<keyword id="KW-0602">Photosynthesis</keyword>
<keyword id="KW-0934">Plastid</keyword>
<keyword id="KW-1185">Reference proteome</keyword>
<keyword id="KW-0793">Thylakoid</keyword>
<keyword id="KW-0812">Transmembrane</keyword>
<keyword id="KW-1133">Transmembrane helix</keyword>
<keyword id="KW-0813">Transport</keyword>
<reference key="1">
    <citation type="journal article" date="1986" name="EMBO J.">
        <title>The complete nucleotide sequence of the tobacco chloroplast genome: its gene organization and expression.</title>
        <authorList>
            <person name="Shinozaki K."/>
            <person name="Ohme M."/>
            <person name="Tanaka M."/>
            <person name="Wakasugi T."/>
            <person name="Hayashida N."/>
            <person name="Matsubayashi T."/>
            <person name="Zaita N."/>
            <person name="Chunwongse J."/>
            <person name="Obokata J."/>
            <person name="Yamaguchi-Shinozaki K."/>
            <person name="Ohto C."/>
            <person name="Torazawa K."/>
            <person name="Meng B.-Y."/>
            <person name="Sugita M."/>
            <person name="Deno H."/>
            <person name="Kamogashira T."/>
            <person name="Yamada K."/>
            <person name="Kusuda J."/>
            <person name="Takaiwa F."/>
            <person name="Kato A."/>
            <person name="Tohdoh N."/>
            <person name="Shimada H."/>
            <person name="Sugiura M."/>
        </authorList>
    </citation>
    <scope>NUCLEOTIDE SEQUENCE [LARGE SCALE GENOMIC DNA]</scope>
    <source>
        <strain>cv. Bright Yellow 4</strain>
    </source>
</reference>
<gene>
    <name evidence="2" type="primary">petD</name>
</gene>
<evidence type="ECO:0000250" key="1"/>
<evidence type="ECO:0000255" key="2">
    <source>
        <dbReference type="HAMAP-Rule" id="MF_01344"/>
    </source>
</evidence>
<feature type="chain" id="PRO_0000061895" description="Cytochrome b6-f complex subunit 4">
    <location>
        <begin position="1"/>
        <end position="160"/>
    </location>
</feature>
<feature type="transmembrane region" description="Helical" evidence="2">
    <location>
        <begin position="36"/>
        <end position="56"/>
    </location>
</feature>
<feature type="transmembrane region" description="Helical" evidence="2">
    <location>
        <begin position="95"/>
        <end position="115"/>
    </location>
</feature>
<feature type="transmembrane region" description="Helical" evidence="2">
    <location>
        <begin position="131"/>
        <end position="151"/>
    </location>
</feature>
<accession>P06249</accession>
<protein>
    <recommendedName>
        <fullName evidence="2">Cytochrome b6-f complex subunit 4</fullName>
    </recommendedName>
    <alternativeName>
        <fullName evidence="2">17 kDa polypeptide</fullName>
    </alternativeName>
</protein>
<proteinExistence type="inferred from homology"/>